<name>RUVC_DEIGD</name>
<dbReference type="EC" id="3.1.21.10" evidence="1"/>
<dbReference type="EMBL" id="CP000359">
    <property type="protein sequence ID" value="ABF44630.1"/>
    <property type="molecule type" value="Genomic_DNA"/>
</dbReference>
<dbReference type="RefSeq" id="WP_011529474.1">
    <property type="nucleotide sequence ID" value="NC_008025.1"/>
</dbReference>
<dbReference type="SMR" id="Q1J1K4"/>
<dbReference type="STRING" id="319795.Dgeo_0327"/>
<dbReference type="KEGG" id="dge:Dgeo_0327"/>
<dbReference type="eggNOG" id="COG0817">
    <property type="taxonomic scope" value="Bacteria"/>
</dbReference>
<dbReference type="HOGENOM" id="CLU_091257_3_1_0"/>
<dbReference type="Proteomes" id="UP000002431">
    <property type="component" value="Chromosome"/>
</dbReference>
<dbReference type="GO" id="GO:0005737">
    <property type="term" value="C:cytoplasm"/>
    <property type="evidence" value="ECO:0007669"/>
    <property type="project" value="UniProtKB-SubCell"/>
</dbReference>
<dbReference type="GO" id="GO:0048476">
    <property type="term" value="C:Holliday junction resolvase complex"/>
    <property type="evidence" value="ECO:0007669"/>
    <property type="project" value="UniProtKB-UniRule"/>
</dbReference>
<dbReference type="GO" id="GO:0008821">
    <property type="term" value="F:crossover junction DNA endonuclease activity"/>
    <property type="evidence" value="ECO:0007669"/>
    <property type="project" value="UniProtKB-UniRule"/>
</dbReference>
<dbReference type="GO" id="GO:0003677">
    <property type="term" value="F:DNA binding"/>
    <property type="evidence" value="ECO:0007669"/>
    <property type="project" value="UniProtKB-KW"/>
</dbReference>
<dbReference type="GO" id="GO:0000287">
    <property type="term" value="F:magnesium ion binding"/>
    <property type="evidence" value="ECO:0007669"/>
    <property type="project" value="UniProtKB-UniRule"/>
</dbReference>
<dbReference type="GO" id="GO:0006310">
    <property type="term" value="P:DNA recombination"/>
    <property type="evidence" value="ECO:0007669"/>
    <property type="project" value="UniProtKB-UniRule"/>
</dbReference>
<dbReference type="GO" id="GO:0006281">
    <property type="term" value="P:DNA repair"/>
    <property type="evidence" value="ECO:0007669"/>
    <property type="project" value="UniProtKB-UniRule"/>
</dbReference>
<dbReference type="CDD" id="cd16962">
    <property type="entry name" value="RuvC"/>
    <property type="match status" value="1"/>
</dbReference>
<dbReference type="FunFam" id="3.30.420.10:FF:000002">
    <property type="entry name" value="Crossover junction endodeoxyribonuclease RuvC"/>
    <property type="match status" value="1"/>
</dbReference>
<dbReference type="Gene3D" id="3.30.420.10">
    <property type="entry name" value="Ribonuclease H-like superfamily/Ribonuclease H"/>
    <property type="match status" value="1"/>
</dbReference>
<dbReference type="HAMAP" id="MF_00034">
    <property type="entry name" value="RuvC"/>
    <property type="match status" value="1"/>
</dbReference>
<dbReference type="InterPro" id="IPR012337">
    <property type="entry name" value="RNaseH-like_sf"/>
</dbReference>
<dbReference type="InterPro" id="IPR036397">
    <property type="entry name" value="RNaseH_sf"/>
</dbReference>
<dbReference type="InterPro" id="IPR002176">
    <property type="entry name" value="X-over_junc_endoDNase_RuvC"/>
</dbReference>
<dbReference type="PANTHER" id="PTHR30194">
    <property type="entry name" value="CROSSOVER JUNCTION ENDODEOXYRIBONUCLEASE RUVC"/>
    <property type="match status" value="1"/>
</dbReference>
<dbReference type="PANTHER" id="PTHR30194:SF3">
    <property type="entry name" value="CROSSOVER JUNCTION ENDODEOXYRIBONUCLEASE RUVC"/>
    <property type="match status" value="1"/>
</dbReference>
<dbReference type="Pfam" id="PF02075">
    <property type="entry name" value="RuvC"/>
    <property type="match status" value="1"/>
</dbReference>
<dbReference type="PRINTS" id="PR00696">
    <property type="entry name" value="RSOLVASERUVC"/>
</dbReference>
<dbReference type="SUPFAM" id="SSF53098">
    <property type="entry name" value="Ribonuclease H-like"/>
    <property type="match status" value="1"/>
</dbReference>
<proteinExistence type="inferred from homology"/>
<evidence type="ECO:0000255" key="1">
    <source>
        <dbReference type="HAMAP-Rule" id="MF_00034"/>
    </source>
</evidence>
<protein>
    <recommendedName>
        <fullName evidence="1">Crossover junction endodeoxyribonuclease RuvC</fullName>
        <ecNumber evidence="1">3.1.21.10</ecNumber>
    </recommendedName>
    <alternativeName>
        <fullName evidence="1">Holliday junction nuclease RuvC</fullName>
    </alternativeName>
    <alternativeName>
        <fullName evidence="1">Holliday junction resolvase RuvC</fullName>
    </alternativeName>
</protein>
<accession>Q1J1K4</accession>
<feature type="chain" id="PRO_1000002747" description="Crossover junction endodeoxyribonuclease RuvC">
    <location>
        <begin position="1"/>
        <end position="168"/>
    </location>
</feature>
<feature type="active site" evidence="1">
    <location>
        <position position="7"/>
    </location>
</feature>
<feature type="active site" evidence="1">
    <location>
        <position position="67"/>
    </location>
</feature>
<feature type="active site" evidence="1">
    <location>
        <position position="139"/>
    </location>
</feature>
<feature type="binding site" evidence="1">
    <location>
        <position position="7"/>
    </location>
    <ligand>
        <name>Mg(2+)</name>
        <dbReference type="ChEBI" id="CHEBI:18420"/>
        <label>1</label>
    </ligand>
</feature>
<feature type="binding site" evidence="1">
    <location>
        <position position="67"/>
    </location>
    <ligand>
        <name>Mg(2+)</name>
        <dbReference type="ChEBI" id="CHEBI:18420"/>
        <label>2</label>
    </ligand>
</feature>
<feature type="binding site" evidence="1">
    <location>
        <position position="139"/>
    </location>
    <ligand>
        <name>Mg(2+)</name>
        <dbReference type="ChEBI" id="CHEBI:18420"/>
        <label>1</label>
    </ligand>
</feature>
<reference key="1">
    <citation type="submission" date="2006-04" db="EMBL/GenBank/DDBJ databases">
        <title>Complete sequence of chromosome of Deinococcus geothermalis DSM 11300.</title>
        <authorList>
            <person name="Copeland A."/>
            <person name="Lucas S."/>
            <person name="Lapidus A."/>
            <person name="Barry K."/>
            <person name="Detter J.C."/>
            <person name="Glavina del Rio T."/>
            <person name="Hammon N."/>
            <person name="Israni S."/>
            <person name="Dalin E."/>
            <person name="Tice H."/>
            <person name="Pitluck S."/>
            <person name="Brettin T."/>
            <person name="Bruce D."/>
            <person name="Han C."/>
            <person name="Tapia R."/>
            <person name="Saunders E."/>
            <person name="Gilna P."/>
            <person name="Schmutz J."/>
            <person name="Larimer F."/>
            <person name="Land M."/>
            <person name="Hauser L."/>
            <person name="Kyrpides N."/>
            <person name="Kim E."/>
            <person name="Daly M.J."/>
            <person name="Fredrickson J.K."/>
            <person name="Makarova K.S."/>
            <person name="Gaidamakova E.K."/>
            <person name="Zhai M."/>
            <person name="Richardson P."/>
        </authorList>
    </citation>
    <scope>NUCLEOTIDE SEQUENCE [LARGE SCALE GENOMIC DNA]</scope>
    <source>
        <strain>DSM 11300 / CIP 105573 / AG-3a</strain>
    </source>
</reference>
<comment type="function">
    <text evidence="1">The RuvA-RuvB-RuvC complex processes Holliday junction (HJ) DNA during genetic recombination and DNA repair. Endonuclease that resolves HJ intermediates. Cleaves cruciform DNA by making single-stranded nicks across the HJ at symmetrical positions within the homologous arms, yielding a 5'-phosphate and a 3'-hydroxyl group; requires a central core of homology in the junction. The consensus cleavage sequence is 5'-(A/T)TT(C/G)-3'. Cleavage occurs on the 3'-side of the TT dinucleotide at the point of strand exchange. HJ branch migration catalyzed by RuvA-RuvB allows RuvC to scan DNA until it finds its consensus sequence, where it cleaves and resolves the cruciform DNA.</text>
</comment>
<comment type="catalytic activity">
    <reaction evidence="1">
        <text>Endonucleolytic cleavage at a junction such as a reciprocal single-stranded crossover between two homologous DNA duplexes (Holliday junction).</text>
        <dbReference type="EC" id="3.1.21.10"/>
    </reaction>
</comment>
<comment type="cofactor">
    <cofactor evidence="1">
        <name>Mg(2+)</name>
        <dbReference type="ChEBI" id="CHEBI:18420"/>
    </cofactor>
    <text evidence="1">Binds 2 Mg(2+) ion per subunit.</text>
</comment>
<comment type="subunit">
    <text evidence="1">Homodimer which binds Holliday junction (HJ) DNA. The HJ becomes 2-fold symmetrical on binding to RuvC with unstacked arms; it has a different conformation from HJ DNA in complex with RuvA. In the full resolvosome a probable DNA-RuvA(4)-RuvB(12)-RuvC(2) complex forms which resolves the HJ.</text>
</comment>
<comment type="subcellular location">
    <subcellularLocation>
        <location evidence="1">Cytoplasm</location>
    </subcellularLocation>
</comment>
<comment type="similarity">
    <text evidence="1">Belongs to the RuvC family.</text>
</comment>
<organism>
    <name type="scientific">Deinococcus geothermalis (strain DSM 11300 / CIP 105573 / AG-3a)</name>
    <dbReference type="NCBI Taxonomy" id="319795"/>
    <lineage>
        <taxon>Bacteria</taxon>
        <taxon>Thermotogati</taxon>
        <taxon>Deinococcota</taxon>
        <taxon>Deinococci</taxon>
        <taxon>Deinococcales</taxon>
        <taxon>Deinococcaceae</taxon>
        <taxon>Deinococcus</taxon>
    </lineage>
</organism>
<gene>
    <name evidence="1" type="primary">ruvC</name>
    <name type="ordered locus">Dgeo_0327</name>
</gene>
<keyword id="KW-0963">Cytoplasm</keyword>
<keyword id="KW-0227">DNA damage</keyword>
<keyword id="KW-0233">DNA recombination</keyword>
<keyword id="KW-0234">DNA repair</keyword>
<keyword id="KW-0238">DNA-binding</keyword>
<keyword id="KW-0255">Endonuclease</keyword>
<keyword id="KW-0378">Hydrolase</keyword>
<keyword id="KW-0460">Magnesium</keyword>
<keyword id="KW-0479">Metal-binding</keyword>
<keyword id="KW-0540">Nuclease</keyword>
<sequence length="168" mass="18384">MIVLGVDPGLANLGLGLVEGDVRKARHLYHVCLTTESAWLMPRRLQYLHEEVARLLAEYRPDAVAIEDQILRRQADVAFKVGQAFGVVQLACAQAGVPIHAYGPMQVKRSLVGTGRADKEQIIYMVKATLGIRELFNNHAADALALALTHLAHQPMRAASTRLAQKSA</sequence>